<feature type="chain" id="PRO_0000288982" description="Photosystem I P700 chlorophyll a apoprotein A1">
    <location>
        <begin position="1"/>
        <end position="750"/>
    </location>
</feature>
<feature type="transmembrane region" description="Helical; Name=I" evidence="1">
    <location>
        <begin position="70"/>
        <end position="93"/>
    </location>
</feature>
<feature type="transmembrane region" description="Helical; Name=II" evidence="1">
    <location>
        <begin position="156"/>
        <end position="179"/>
    </location>
</feature>
<feature type="transmembrane region" description="Helical; Name=III" evidence="1">
    <location>
        <begin position="195"/>
        <end position="219"/>
    </location>
</feature>
<feature type="transmembrane region" description="Helical; Name=IV" evidence="1">
    <location>
        <begin position="291"/>
        <end position="309"/>
    </location>
</feature>
<feature type="transmembrane region" description="Helical; Name=V" evidence="1">
    <location>
        <begin position="346"/>
        <end position="369"/>
    </location>
</feature>
<feature type="transmembrane region" description="Helical; Name=VI" evidence="1">
    <location>
        <begin position="385"/>
        <end position="411"/>
    </location>
</feature>
<feature type="transmembrane region" description="Helical; Name=VII" evidence="1">
    <location>
        <begin position="433"/>
        <end position="455"/>
    </location>
</feature>
<feature type="transmembrane region" description="Helical; Name=VIII" evidence="1">
    <location>
        <begin position="531"/>
        <end position="549"/>
    </location>
</feature>
<feature type="transmembrane region" description="Helical; Name=IX" evidence="1">
    <location>
        <begin position="589"/>
        <end position="610"/>
    </location>
</feature>
<feature type="transmembrane region" description="Helical; Name=X" evidence="1">
    <location>
        <begin position="664"/>
        <end position="686"/>
    </location>
</feature>
<feature type="transmembrane region" description="Helical; Name=XI" evidence="1">
    <location>
        <begin position="724"/>
        <end position="744"/>
    </location>
</feature>
<feature type="binding site" evidence="1">
    <location>
        <position position="573"/>
    </location>
    <ligand>
        <name>[4Fe-4S] cluster</name>
        <dbReference type="ChEBI" id="CHEBI:49883"/>
        <note>ligand shared between dimeric partners</note>
    </ligand>
</feature>
<feature type="binding site" evidence="1">
    <location>
        <position position="582"/>
    </location>
    <ligand>
        <name>[4Fe-4S] cluster</name>
        <dbReference type="ChEBI" id="CHEBI:49883"/>
        <note>ligand shared between dimeric partners</note>
    </ligand>
</feature>
<feature type="binding site" description="axial binding residue" evidence="1">
    <location>
        <position position="675"/>
    </location>
    <ligand>
        <name>chlorophyll a'</name>
        <dbReference type="ChEBI" id="CHEBI:189419"/>
        <label>A1</label>
    </ligand>
    <ligandPart>
        <name>Mg</name>
        <dbReference type="ChEBI" id="CHEBI:25107"/>
    </ligandPart>
</feature>
<feature type="binding site" description="axial binding residue" evidence="1">
    <location>
        <position position="683"/>
    </location>
    <ligand>
        <name>chlorophyll a</name>
        <dbReference type="ChEBI" id="CHEBI:58416"/>
        <label>A3</label>
    </ligand>
    <ligandPart>
        <name>Mg</name>
        <dbReference type="ChEBI" id="CHEBI:25107"/>
    </ligandPart>
</feature>
<feature type="binding site" evidence="1">
    <location>
        <position position="691"/>
    </location>
    <ligand>
        <name>chlorophyll a</name>
        <dbReference type="ChEBI" id="CHEBI:58416"/>
        <label>A3</label>
    </ligand>
</feature>
<feature type="binding site" evidence="1">
    <location>
        <position position="692"/>
    </location>
    <ligand>
        <name>phylloquinone</name>
        <dbReference type="ChEBI" id="CHEBI:18067"/>
        <label>A</label>
    </ligand>
</feature>
<gene>
    <name evidence="1" type="primary">psaA</name>
    <name type="ORF">9311048</name>
</gene>
<comment type="function">
    <text>PsaA and PsaB bind P700, the primary electron donor of photosystem I (PSI), as well as the electron acceptors A0, A1 and FX. PSI is a plastocyanin-ferredoxin oxidoreductase, converting photonic excitation into a charge separation, which transfers an electron from the donor P700 chlorophyll pair to the spectroscopically characterized acceptors A0, A1, FX, FA and FB in turn. Oxidized P700 is reduced on the lumenal side of the thylakoid membrane by plastocyanin.</text>
</comment>
<comment type="catalytic activity">
    <reaction evidence="1">
        <text>reduced [plastocyanin] + hnu + oxidized [2Fe-2S]-[ferredoxin] = oxidized [plastocyanin] + reduced [2Fe-2S]-[ferredoxin]</text>
        <dbReference type="Rhea" id="RHEA:30407"/>
        <dbReference type="Rhea" id="RHEA-COMP:10000"/>
        <dbReference type="Rhea" id="RHEA-COMP:10001"/>
        <dbReference type="Rhea" id="RHEA-COMP:10039"/>
        <dbReference type="Rhea" id="RHEA-COMP:10040"/>
        <dbReference type="ChEBI" id="CHEBI:29036"/>
        <dbReference type="ChEBI" id="CHEBI:30212"/>
        <dbReference type="ChEBI" id="CHEBI:33737"/>
        <dbReference type="ChEBI" id="CHEBI:33738"/>
        <dbReference type="ChEBI" id="CHEBI:49552"/>
        <dbReference type="EC" id="1.97.1.12"/>
    </reaction>
</comment>
<comment type="cofactor">
    <text evidence="1">P700 is a chlorophyll a/chlorophyll a' dimer, A0 is one or more chlorophyll a, A1 is one or both phylloquinones and FX is a shared 4Fe-4S iron-sulfur center.</text>
</comment>
<comment type="subunit">
    <text evidence="1">The PsaA/B heterodimer binds the P700 chlorophyll special pair and subsequent electron acceptors. PSI consists of a core antenna complex that captures photons, and an electron transfer chain that converts photonic excitation into a charge separation. The eukaryotic PSI reaction center is composed of at least 11 subunits.</text>
</comment>
<comment type="subcellular location">
    <subcellularLocation>
        <location evidence="1">Plastid</location>
        <location evidence="1">Chloroplast thylakoid membrane</location>
        <topology evidence="1">Multi-pass membrane protein</topology>
    </subcellularLocation>
</comment>
<comment type="similarity">
    <text evidence="1">Belongs to the PsaA/PsaB family.</text>
</comment>
<comment type="sequence caution" evidence="2">
    <conflict type="erroneous initiation">
        <sequence resource="EMBL-CDS" id="AAS46055"/>
    </conflict>
</comment>
<reference key="1">
    <citation type="journal article" date="2004" name="Plant Physiol.">
        <title>A comparison of rice chloroplast genomes.</title>
        <authorList>
            <person name="Tang J."/>
            <person name="Xia H."/>
            <person name="Cao M."/>
            <person name="Zhang X."/>
            <person name="Zeng W."/>
            <person name="Hu S."/>
            <person name="Tong W."/>
            <person name="Wang J."/>
            <person name="Wang J."/>
            <person name="Yu J."/>
            <person name="Yang H."/>
            <person name="Zhu L."/>
        </authorList>
    </citation>
    <scope>NUCLEOTIDE SEQUENCE [LARGE SCALE GENOMIC DNA]</scope>
    <source>
        <strain>cv. 93-11</strain>
    </source>
</reference>
<geneLocation type="chloroplast"/>
<evidence type="ECO:0000255" key="1">
    <source>
        <dbReference type="HAMAP-Rule" id="MF_00458"/>
    </source>
</evidence>
<evidence type="ECO:0000305" key="2"/>
<organism>
    <name type="scientific">Oryza sativa subsp. indica</name>
    <name type="common">Rice</name>
    <dbReference type="NCBI Taxonomy" id="39946"/>
    <lineage>
        <taxon>Eukaryota</taxon>
        <taxon>Viridiplantae</taxon>
        <taxon>Streptophyta</taxon>
        <taxon>Embryophyta</taxon>
        <taxon>Tracheophyta</taxon>
        <taxon>Spermatophyta</taxon>
        <taxon>Magnoliopsida</taxon>
        <taxon>Liliopsida</taxon>
        <taxon>Poales</taxon>
        <taxon>Poaceae</taxon>
        <taxon>BOP clade</taxon>
        <taxon>Oryzoideae</taxon>
        <taxon>Oryzeae</taxon>
        <taxon>Oryzinae</taxon>
        <taxon>Oryza</taxon>
        <taxon>Oryza sativa</taxon>
    </lineage>
</organism>
<keyword id="KW-0004">4Fe-4S</keyword>
<keyword id="KW-0148">Chlorophyll</keyword>
<keyword id="KW-0150">Chloroplast</keyword>
<keyword id="KW-0157">Chromophore</keyword>
<keyword id="KW-0249">Electron transport</keyword>
<keyword id="KW-0408">Iron</keyword>
<keyword id="KW-0411">Iron-sulfur</keyword>
<keyword id="KW-0460">Magnesium</keyword>
<keyword id="KW-0472">Membrane</keyword>
<keyword id="KW-0479">Metal-binding</keyword>
<keyword id="KW-0560">Oxidoreductase</keyword>
<keyword id="KW-0602">Photosynthesis</keyword>
<keyword id="KW-0603">Photosystem I</keyword>
<keyword id="KW-0934">Plastid</keyword>
<keyword id="KW-1185">Reference proteome</keyword>
<keyword id="KW-0793">Thylakoid</keyword>
<keyword id="KW-0812">Transmembrane</keyword>
<keyword id="KW-1133">Transmembrane helix</keyword>
<keyword id="KW-0813">Transport</keyword>
<proteinExistence type="inferred from homology"/>
<accession>P0C354</accession>
<accession>P12155</accession>
<accession>Q6QY10</accession>
<accession>Q6QY74</accession>
<sequence length="750" mass="83169">MMIRSPEPEVKIVVDRDPVKTSFEEWARPGHFSRTIAKGPDTTTWIWNLHADAHDFDSHTGDLEEISRKVFSAHFGQLSIIFLWLSGMYFHGARFSNYEAWLSDPTHIGPSAQVVWPIVGQEILNGDVGGGFRGIQITSGFFQIWRASGITSELQLYCTAIGALIFASLMLFAGWFHYHKAAPKLAWFQDVESMLNHHLAGLLGLGSLSWAGHQIHVSLPINQFLDAGVDPKEIPLPHEFILNRDLLAQLYPSFAEGATPFFTLNWSKYAEFLSFRGGLDPITGGLWLSDIAHHHLAIAILFLIAGHMYRTNWGIGHGLKDILEAHKGPFTGQGHKGLYEILTTSWHAQLSLNLAMLGSTTIVVAHHMYSMPPYPYLATDYGTQLSLFTHHMWIGGFLIVGAAAHAAIFMVRDYDPTTRYNDLLDRVLRHRDAIISHLNWVCIFLGFHSFGLYIHNDTMSALGRPQDMFSDTAIQLQPIFAQWVQNLHAGAPSVTAPGATTSTSLTWGGGELVAVGGKVALLPIPLGTADFLVHHIHAFTIHVTVLILLKGVLFARSSRLIPDKANLGFRFPCDGPGRGGTCQVSAWDHVFLGLFWMYNSISVVIFHFSWKMQSDVWGTISDQGVVTHITGGNFAQSSITINGWLRDFLWAQASQVIQSYGSSLSAYGLFFLGAHFVWAFSLMFLFSGRGYWQELIESIVWAHNKLKVAPATQPRALSIIQGRAVGVTHYLLGGIATTWAFFLARIIAVG</sequence>
<name>PSAA_ORYSI</name>
<protein>
    <recommendedName>
        <fullName evidence="1">Photosystem I P700 chlorophyll a apoprotein A1</fullName>
        <ecNumber evidence="1">1.97.1.12</ecNumber>
    </recommendedName>
    <alternativeName>
        <fullName evidence="1">PSI-A</fullName>
    </alternativeName>
    <alternativeName>
        <fullName evidence="1">PsaA</fullName>
    </alternativeName>
</protein>
<dbReference type="EC" id="1.97.1.12" evidence="1"/>
<dbReference type="EMBL" id="AY522329">
    <property type="protein sequence ID" value="AAS46055.1"/>
    <property type="status" value="ALT_INIT"/>
    <property type="molecule type" value="Genomic_DNA"/>
</dbReference>
<dbReference type="RefSeq" id="YP_009161364.1">
    <property type="nucleotide sequence ID" value="NC_027678.1"/>
</dbReference>
<dbReference type="RefSeq" id="YP_654215.2">
    <property type="nucleotide sequence ID" value="NC_008155.1"/>
</dbReference>
<dbReference type="SMR" id="P0C354"/>
<dbReference type="STRING" id="39946.P0C354"/>
<dbReference type="GeneID" id="4126885"/>
<dbReference type="Proteomes" id="UP000007015">
    <property type="component" value="Chloroplast"/>
</dbReference>
<dbReference type="GO" id="GO:0009535">
    <property type="term" value="C:chloroplast thylakoid membrane"/>
    <property type="evidence" value="ECO:0007669"/>
    <property type="project" value="UniProtKB-SubCell"/>
</dbReference>
<dbReference type="GO" id="GO:0009522">
    <property type="term" value="C:photosystem I"/>
    <property type="evidence" value="ECO:0007669"/>
    <property type="project" value="UniProtKB-KW"/>
</dbReference>
<dbReference type="GO" id="GO:0009536">
    <property type="term" value="C:plastid"/>
    <property type="evidence" value="ECO:0000305"/>
    <property type="project" value="Gramene"/>
</dbReference>
<dbReference type="GO" id="GO:0051539">
    <property type="term" value="F:4 iron, 4 sulfur cluster binding"/>
    <property type="evidence" value="ECO:0007669"/>
    <property type="project" value="UniProtKB-KW"/>
</dbReference>
<dbReference type="GO" id="GO:0016168">
    <property type="term" value="F:chlorophyll binding"/>
    <property type="evidence" value="ECO:0007669"/>
    <property type="project" value="UniProtKB-KW"/>
</dbReference>
<dbReference type="GO" id="GO:0009055">
    <property type="term" value="F:electron transfer activity"/>
    <property type="evidence" value="ECO:0007669"/>
    <property type="project" value="UniProtKB-UniRule"/>
</dbReference>
<dbReference type="GO" id="GO:0000287">
    <property type="term" value="F:magnesium ion binding"/>
    <property type="evidence" value="ECO:0007669"/>
    <property type="project" value="UniProtKB-UniRule"/>
</dbReference>
<dbReference type="GO" id="GO:0016491">
    <property type="term" value="F:oxidoreductase activity"/>
    <property type="evidence" value="ECO:0007669"/>
    <property type="project" value="UniProtKB-KW"/>
</dbReference>
<dbReference type="GO" id="GO:0015979">
    <property type="term" value="P:photosynthesis"/>
    <property type="evidence" value="ECO:0007669"/>
    <property type="project" value="UniProtKB-UniRule"/>
</dbReference>
<dbReference type="FunFam" id="1.20.1130.10:FF:000001">
    <property type="entry name" value="Photosystem I P700 chlorophyll a apoprotein A2"/>
    <property type="match status" value="1"/>
</dbReference>
<dbReference type="Gene3D" id="1.20.1130.10">
    <property type="entry name" value="Photosystem I PsaA/PsaB"/>
    <property type="match status" value="1"/>
</dbReference>
<dbReference type="HAMAP" id="MF_00458">
    <property type="entry name" value="PSI_PsaA"/>
    <property type="match status" value="1"/>
</dbReference>
<dbReference type="InterPro" id="IPR006243">
    <property type="entry name" value="PSI_PsaA"/>
</dbReference>
<dbReference type="InterPro" id="IPR001280">
    <property type="entry name" value="PSI_PsaA/B"/>
</dbReference>
<dbReference type="InterPro" id="IPR020586">
    <property type="entry name" value="PSI_PsaA/B_CS"/>
</dbReference>
<dbReference type="InterPro" id="IPR036408">
    <property type="entry name" value="PSI_PsaA/B_sf"/>
</dbReference>
<dbReference type="NCBIfam" id="TIGR01335">
    <property type="entry name" value="psaA"/>
    <property type="match status" value="1"/>
</dbReference>
<dbReference type="PANTHER" id="PTHR30128">
    <property type="entry name" value="OUTER MEMBRANE PROTEIN, OMPA-RELATED"/>
    <property type="match status" value="1"/>
</dbReference>
<dbReference type="PANTHER" id="PTHR30128:SF19">
    <property type="entry name" value="PHOTOSYSTEM I P700 CHLOROPHYLL A APOPROTEIN A1-RELATED"/>
    <property type="match status" value="1"/>
</dbReference>
<dbReference type="Pfam" id="PF00223">
    <property type="entry name" value="PsaA_PsaB"/>
    <property type="match status" value="1"/>
</dbReference>
<dbReference type="PIRSF" id="PIRSF002905">
    <property type="entry name" value="PSI_A"/>
    <property type="match status" value="1"/>
</dbReference>
<dbReference type="PRINTS" id="PR00257">
    <property type="entry name" value="PHOTSYSPSAAB"/>
</dbReference>
<dbReference type="SUPFAM" id="SSF81558">
    <property type="entry name" value="Photosystem I subunits PsaA/PsaB"/>
    <property type="match status" value="1"/>
</dbReference>
<dbReference type="PROSITE" id="PS00419">
    <property type="entry name" value="PHOTOSYSTEM_I_PSAAB"/>
    <property type="match status" value="1"/>
</dbReference>